<proteinExistence type="predicted"/>
<comment type="miscellaneous">
    <text>There are 3 tandem-duplicated genes coding for this protein in S.cerevisiae (YLR156W, YLR159W and YLR161W). Additionally, a fourth copy has been disrupted by a Ty1 retrotransposon, which led to the prediction of the 2 dubious ORFs YLR157W-D and YLR157W-E.</text>
</comment>
<organism>
    <name type="scientific">Saccharomyces cerevisiae (strain ATCC 204508 / S288c)</name>
    <name type="common">Baker's yeast</name>
    <dbReference type="NCBI Taxonomy" id="559292"/>
    <lineage>
        <taxon>Eukaryota</taxon>
        <taxon>Fungi</taxon>
        <taxon>Dikarya</taxon>
        <taxon>Ascomycota</taxon>
        <taxon>Saccharomycotina</taxon>
        <taxon>Saccharomycetes</taxon>
        <taxon>Saccharomycetales</taxon>
        <taxon>Saccharomycetaceae</taxon>
        <taxon>Saccharomyces</taxon>
    </lineage>
</organism>
<name>YL57D_YEAST</name>
<feature type="chain" id="PRO_0000393297" description="Putative uncharacterized protein YLR157W-D">
    <location>
        <begin position="1"/>
        <end position="70"/>
    </location>
</feature>
<dbReference type="EMBL" id="U51921">
    <property type="status" value="NOT_ANNOTATED_CDS"/>
    <property type="molecule type" value="Genomic_DNA"/>
</dbReference>
<dbReference type="EMBL" id="AF480008">
    <property type="protein sequence ID" value="AAL79321.1"/>
    <property type="molecule type" value="Genomic_DNA"/>
</dbReference>
<dbReference type="EMBL" id="BK006945">
    <property type="protein sequence ID" value="DAA09473.1"/>
    <property type="molecule type" value="Genomic_DNA"/>
</dbReference>
<dbReference type="SMR" id="P0CE99"/>
<dbReference type="BioGRID" id="36954">
    <property type="interactions" value="1"/>
</dbReference>
<dbReference type="FunCoup" id="P0CE99">
    <property type="interactions" value="7"/>
</dbReference>
<dbReference type="EnsemblFungi" id="YLR157W-D_mRNA">
    <property type="protein sequence ID" value="YLR157W-D"/>
    <property type="gene ID" value="YLR157W-D"/>
</dbReference>
<dbReference type="GeneID" id="1466412"/>
<dbReference type="KEGG" id="sce:YLR157W-D"/>
<dbReference type="AGR" id="SGD:S000028677"/>
<dbReference type="SGD" id="S000028677">
    <property type="gene designation" value="YLR157W-D"/>
</dbReference>
<dbReference type="VEuPathDB" id="FungiDB:YLR157W-D"/>
<dbReference type="GeneTree" id="ENSGT00940000178389"/>
<dbReference type="HOGENOM" id="CLU_2759748_0_0_1"/>
<dbReference type="InParanoid" id="P0CE99"/>
<dbReference type="BioCyc" id="YEAST:G3O-32585-MONOMER"/>
<dbReference type="PRO" id="PR:P0CE99"/>
<dbReference type="Proteomes" id="UP000002311">
    <property type="component" value="Chromosome XII"/>
</dbReference>
<dbReference type="RNAct" id="P0CE99">
    <property type="molecule type" value="protein"/>
</dbReference>
<sequence length="70" mass="8195">MKFQYALAKEQLGSNSRSGVKKLISKHHWLPEYYFSDLSFSVVQQWDSRAIEKTTIISCMRPANQEIYPL</sequence>
<gene>
    <name type="ordered locus">YLR157W-D</name>
</gene>
<reference key="1">
    <citation type="journal article" date="1997" name="Nature">
        <title>The nucleotide sequence of Saccharomyces cerevisiae chromosome XII.</title>
        <authorList>
            <person name="Johnston M."/>
            <person name="Hillier L.W."/>
            <person name="Riles L."/>
            <person name="Albermann K."/>
            <person name="Andre B."/>
            <person name="Ansorge W."/>
            <person name="Benes V."/>
            <person name="Brueckner M."/>
            <person name="Delius H."/>
            <person name="Dubois E."/>
            <person name="Duesterhoeft A."/>
            <person name="Entian K.-D."/>
            <person name="Floeth M."/>
            <person name="Goffeau A."/>
            <person name="Hebling U."/>
            <person name="Heumann K."/>
            <person name="Heuss-Neitzel D."/>
            <person name="Hilbert H."/>
            <person name="Hilger F."/>
            <person name="Kleine K."/>
            <person name="Koetter P."/>
            <person name="Louis E.J."/>
            <person name="Messenguy F."/>
            <person name="Mewes H.-W."/>
            <person name="Miosga T."/>
            <person name="Moestl D."/>
            <person name="Mueller-Auer S."/>
            <person name="Nentwich U."/>
            <person name="Obermaier B."/>
            <person name="Piravandi E."/>
            <person name="Pohl T.M."/>
            <person name="Portetelle D."/>
            <person name="Purnelle B."/>
            <person name="Rechmann S."/>
            <person name="Rieger M."/>
            <person name="Rinke M."/>
            <person name="Rose M."/>
            <person name="Scharfe M."/>
            <person name="Scherens B."/>
            <person name="Scholler P."/>
            <person name="Schwager C."/>
            <person name="Schwarz S."/>
            <person name="Underwood A.P."/>
            <person name="Urrestarazu L.A."/>
            <person name="Vandenbol M."/>
            <person name="Verhasselt P."/>
            <person name="Vierendeels F."/>
            <person name="Voet M."/>
            <person name="Volckaert G."/>
            <person name="Voss H."/>
            <person name="Wambutt R."/>
            <person name="Wedler E."/>
            <person name="Wedler H."/>
            <person name="Zimmermann F.K."/>
            <person name="Zollner A."/>
            <person name="Hani J."/>
            <person name="Hoheisel J.D."/>
        </authorList>
    </citation>
    <scope>NUCLEOTIDE SEQUENCE [LARGE SCALE GENOMIC DNA]</scope>
    <source>
        <strain>ATCC 204508 / S288c</strain>
    </source>
</reference>
<reference key="2">
    <citation type="journal article" date="2014" name="G3 (Bethesda)">
        <title>The reference genome sequence of Saccharomyces cerevisiae: Then and now.</title>
        <authorList>
            <person name="Engel S.R."/>
            <person name="Dietrich F.S."/>
            <person name="Fisk D.G."/>
            <person name="Binkley G."/>
            <person name="Balakrishnan R."/>
            <person name="Costanzo M.C."/>
            <person name="Dwight S.S."/>
            <person name="Hitz B.C."/>
            <person name="Karra K."/>
            <person name="Nash R.S."/>
            <person name="Weng S."/>
            <person name="Wong E.D."/>
            <person name="Lloyd P."/>
            <person name="Skrzypek M.S."/>
            <person name="Miyasato S.R."/>
            <person name="Simison M."/>
            <person name="Cherry J.M."/>
        </authorList>
    </citation>
    <scope>GENOME REANNOTATION</scope>
    <source>
        <strain>ATCC 204508 / S288c</strain>
    </source>
</reference>
<reference key="3">
    <citation type="journal article" date="2002" name="Nat. Biotechnol.">
        <title>An integrated approach for finding overlooked genes in yeast.</title>
        <authorList>
            <person name="Kumar A."/>
            <person name="Harrison P.M."/>
            <person name="Cheung K.-H."/>
            <person name="Lan N."/>
            <person name="Echols N."/>
            <person name="Bertone P."/>
            <person name="Miller P."/>
            <person name="Gerstein M.B."/>
            <person name="Snyder M."/>
        </authorList>
    </citation>
    <scope>NUCLEOTIDE SEQUENCE [GENOMIC DNA]</scope>
</reference>
<accession>P0CE99</accession>
<accession>D6VYF7</accession>
<accession>Q12478</accession>
<accession>Q8TGJ5</accession>
<accession>Q8TGJ6</accession>
<keyword id="KW-1185">Reference proteome</keyword>
<protein>
    <recommendedName>
        <fullName>Putative uncharacterized protein YLR157W-D</fullName>
    </recommendedName>
</protein>